<name>DEOD_HAEIE</name>
<organism>
    <name type="scientific">Haemophilus influenzae (strain PittEE)</name>
    <dbReference type="NCBI Taxonomy" id="374930"/>
    <lineage>
        <taxon>Bacteria</taxon>
        <taxon>Pseudomonadati</taxon>
        <taxon>Pseudomonadota</taxon>
        <taxon>Gammaproteobacteria</taxon>
        <taxon>Pasteurellales</taxon>
        <taxon>Pasteurellaceae</taxon>
        <taxon>Haemophilus</taxon>
    </lineage>
</organism>
<protein>
    <recommendedName>
        <fullName evidence="2">Purine nucleoside phosphorylase DeoD-type</fullName>
        <shortName evidence="2">PNP</shortName>
        <ecNumber evidence="2">2.4.2.1</ecNumber>
    </recommendedName>
</protein>
<gene>
    <name evidence="2" type="primary">deoD</name>
    <name type="ordered locus">CGSHiEE_00410</name>
</gene>
<keyword id="KW-0328">Glycosyltransferase</keyword>
<keyword id="KW-0808">Transferase</keyword>
<reference key="1">
    <citation type="journal article" date="2007" name="Genome Biol.">
        <title>Characterization and modeling of the Haemophilus influenzae core and supragenomes based on the complete genomic sequences of Rd and 12 clinical nontypeable strains.</title>
        <authorList>
            <person name="Hogg J.S."/>
            <person name="Hu F.Z."/>
            <person name="Janto B."/>
            <person name="Boissy R."/>
            <person name="Hayes J."/>
            <person name="Keefe R."/>
            <person name="Post J.C."/>
            <person name="Ehrlich G.D."/>
        </authorList>
    </citation>
    <scope>NUCLEOTIDE SEQUENCE [LARGE SCALE GENOMIC DNA]</scope>
    <source>
        <strain>PittEE</strain>
    </source>
</reference>
<feature type="chain" id="PRO_1000069631" description="Purine nucleoside phosphorylase DeoD-type">
    <location>
        <begin position="1"/>
        <end position="238"/>
    </location>
</feature>
<feature type="active site" description="Proton donor" evidence="2">
    <location>
        <position position="204"/>
    </location>
</feature>
<feature type="binding site" evidence="1">
    <location>
        <position position="4"/>
    </location>
    <ligand>
        <name>a purine D-ribonucleoside</name>
        <dbReference type="ChEBI" id="CHEBI:142355"/>
        <note>ligand shared between dimeric partners</note>
    </ligand>
</feature>
<feature type="binding site" description="in other chain" evidence="1">
    <location>
        <position position="20"/>
    </location>
    <ligand>
        <name>phosphate</name>
        <dbReference type="ChEBI" id="CHEBI:43474"/>
        <note>ligand shared between dimeric partners</note>
    </ligand>
</feature>
<feature type="binding site" description="in other chain" evidence="1">
    <location>
        <position position="24"/>
    </location>
    <ligand>
        <name>phosphate</name>
        <dbReference type="ChEBI" id="CHEBI:43474"/>
        <note>ligand shared between dimeric partners</note>
    </ligand>
</feature>
<feature type="binding site" evidence="1">
    <location>
        <position position="43"/>
    </location>
    <ligand>
        <name>phosphate</name>
        <dbReference type="ChEBI" id="CHEBI:43474"/>
        <note>ligand shared between dimeric partners</note>
    </ligand>
</feature>
<feature type="binding site" description="in other chain" evidence="1">
    <location>
        <begin position="87"/>
        <end position="90"/>
    </location>
    <ligand>
        <name>phosphate</name>
        <dbReference type="ChEBI" id="CHEBI:43474"/>
        <note>ligand shared between dimeric partners</note>
    </ligand>
</feature>
<feature type="binding site" description="in other chain" evidence="1">
    <location>
        <begin position="179"/>
        <end position="181"/>
    </location>
    <ligand>
        <name>a purine D-ribonucleoside</name>
        <dbReference type="ChEBI" id="CHEBI:142355"/>
        <note>ligand shared between dimeric partners</note>
    </ligand>
</feature>
<feature type="binding site" description="in other chain" evidence="1">
    <location>
        <begin position="203"/>
        <end position="204"/>
    </location>
    <ligand>
        <name>a purine D-ribonucleoside</name>
        <dbReference type="ChEBI" id="CHEBI:142355"/>
        <note>ligand shared between dimeric partners</note>
    </ligand>
</feature>
<feature type="site" description="Important for catalytic activity" evidence="2">
    <location>
        <position position="217"/>
    </location>
</feature>
<comment type="function">
    <text evidence="2">Catalyzes the reversible phosphorolytic breakdown of the N-glycosidic bond in the beta-(deoxy)ribonucleoside molecules, with the formation of the corresponding free purine bases and pentose-1-phosphate.</text>
</comment>
<comment type="catalytic activity">
    <reaction evidence="2">
        <text>a purine D-ribonucleoside + phosphate = a purine nucleobase + alpha-D-ribose 1-phosphate</text>
        <dbReference type="Rhea" id="RHEA:19805"/>
        <dbReference type="ChEBI" id="CHEBI:26386"/>
        <dbReference type="ChEBI" id="CHEBI:43474"/>
        <dbReference type="ChEBI" id="CHEBI:57720"/>
        <dbReference type="ChEBI" id="CHEBI:142355"/>
        <dbReference type="EC" id="2.4.2.1"/>
    </reaction>
</comment>
<comment type="catalytic activity">
    <reaction evidence="2">
        <text>a purine 2'-deoxy-D-ribonucleoside + phosphate = a purine nucleobase + 2-deoxy-alpha-D-ribose 1-phosphate</text>
        <dbReference type="Rhea" id="RHEA:36431"/>
        <dbReference type="ChEBI" id="CHEBI:26386"/>
        <dbReference type="ChEBI" id="CHEBI:43474"/>
        <dbReference type="ChEBI" id="CHEBI:57259"/>
        <dbReference type="ChEBI" id="CHEBI:142361"/>
        <dbReference type="EC" id="2.4.2.1"/>
    </reaction>
</comment>
<comment type="subunit">
    <text evidence="2">Homohexamer; trimer of homodimers.</text>
</comment>
<comment type="similarity">
    <text evidence="2">Belongs to the PNP/UDP phosphorylase family.</text>
</comment>
<evidence type="ECO:0000250" key="1">
    <source>
        <dbReference type="UniProtKB" id="P50389"/>
    </source>
</evidence>
<evidence type="ECO:0000255" key="2">
    <source>
        <dbReference type="HAMAP-Rule" id="MF_01627"/>
    </source>
</evidence>
<proteinExistence type="inferred from homology"/>
<accession>A5U9X5</accession>
<sequence length="238" mass="25888">MTPHINAPEGAFADVVLMPGDPLRAKYIAETFLQDVVEVTNVRNMLGFTGTYKGRKISIMGHGMGIPSCSIYAKELITEYGVKKIIRVGSCGSVRMDVKVRDVIIGLGACTDSKVNRIRFKDNDFAAIADFDMAQAAVQAAKAKGKAVRVGNLFSADLFYTPDVEMFDVMEKYGILGVEMEAAGIYGVAAEYSAKALTICTVSDHIRTHEQTTAEERQLTFNDMIEIALDSVLIGDAQ</sequence>
<dbReference type="EC" id="2.4.2.1" evidence="2"/>
<dbReference type="EMBL" id="CP000671">
    <property type="protein sequence ID" value="ABQ97576.1"/>
    <property type="molecule type" value="Genomic_DNA"/>
</dbReference>
<dbReference type="SMR" id="A5U9X5"/>
<dbReference type="KEGG" id="hip:CGSHiEE_00410"/>
<dbReference type="HOGENOM" id="CLU_068457_2_0_6"/>
<dbReference type="GO" id="GO:0005829">
    <property type="term" value="C:cytosol"/>
    <property type="evidence" value="ECO:0007669"/>
    <property type="project" value="TreeGrafter"/>
</dbReference>
<dbReference type="GO" id="GO:0004731">
    <property type="term" value="F:purine-nucleoside phosphorylase activity"/>
    <property type="evidence" value="ECO:0007669"/>
    <property type="project" value="UniProtKB-UniRule"/>
</dbReference>
<dbReference type="GO" id="GO:0006152">
    <property type="term" value="P:purine nucleoside catabolic process"/>
    <property type="evidence" value="ECO:0007669"/>
    <property type="project" value="TreeGrafter"/>
</dbReference>
<dbReference type="CDD" id="cd09006">
    <property type="entry name" value="PNP_EcPNPI-like"/>
    <property type="match status" value="1"/>
</dbReference>
<dbReference type="FunFam" id="3.40.50.1580:FF:000002">
    <property type="entry name" value="Purine nucleoside phosphorylase DeoD-type"/>
    <property type="match status" value="1"/>
</dbReference>
<dbReference type="Gene3D" id="3.40.50.1580">
    <property type="entry name" value="Nucleoside phosphorylase domain"/>
    <property type="match status" value="1"/>
</dbReference>
<dbReference type="HAMAP" id="MF_01627">
    <property type="entry name" value="Pur_nucleosid_phosp"/>
    <property type="match status" value="1"/>
</dbReference>
<dbReference type="InterPro" id="IPR004402">
    <property type="entry name" value="DeoD-type"/>
</dbReference>
<dbReference type="InterPro" id="IPR018016">
    <property type="entry name" value="Nucleoside_phosphorylase_CS"/>
</dbReference>
<dbReference type="InterPro" id="IPR000845">
    <property type="entry name" value="Nucleoside_phosphorylase_d"/>
</dbReference>
<dbReference type="InterPro" id="IPR035994">
    <property type="entry name" value="Nucleoside_phosphorylase_sf"/>
</dbReference>
<dbReference type="NCBIfam" id="TIGR00107">
    <property type="entry name" value="deoD"/>
    <property type="match status" value="1"/>
</dbReference>
<dbReference type="NCBIfam" id="NF004489">
    <property type="entry name" value="PRK05819.1"/>
    <property type="match status" value="1"/>
</dbReference>
<dbReference type="NCBIfam" id="NF009914">
    <property type="entry name" value="PRK13374.1"/>
    <property type="match status" value="1"/>
</dbReference>
<dbReference type="PANTHER" id="PTHR43691:SF2">
    <property type="entry name" value="PURINE NUCLEOSIDE PHOSPHORYLASE DEOD-TYPE"/>
    <property type="match status" value="1"/>
</dbReference>
<dbReference type="PANTHER" id="PTHR43691">
    <property type="entry name" value="URIDINE PHOSPHORYLASE"/>
    <property type="match status" value="1"/>
</dbReference>
<dbReference type="Pfam" id="PF01048">
    <property type="entry name" value="PNP_UDP_1"/>
    <property type="match status" value="1"/>
</dbReference>
<dbReference type="SUPFAM" id="SSF53167">
    <property type="entry name" value="Purine and uridine phosphorylases"/>
    <property type="match status" value="1"/>
</dbReference>
<dbReference type="PROSITE" id="PS01232">
    <property type="entry name" value="PNP_UDP_1"/>
    <property type="match status" value="1"/>
</dbReference>